<evidence type="ECO:0000255" key="1"/>
<evidence type="ECO:0000255" key="2">
    <source>
        <dbReference type="PROSITE-ProRule" id="PRU00159"/>
    </source>
</evidence>
<evidence type="ECO:0000256" key="3">
    <source>
        <dbReference type="SAM" id="MobiDB-lite"/>
    </source>
</evidence>
<evidence type="ECO:0000269" key="4">
    <source>
    </source>
</evidence>
<evidence type="ECO:0000269" key="5">
    <source>
    </source>
</evidence>
<evidence type="ECO:0000303" key="6">
    <source>
    </source>
</evidence>
<evidence type="ECO:0000305" key="7"/>
<dbReference type="EC" id="2.7.11.1" evidence="7"/>
<dbReference type="EMBL" id="AL035526">
    <property type="protein sequence ID" value="CAB37449.1"/>
    <property type="status" value="ALT_SEQ"/>
    <property type="molecule type" value="Genomic_DNA"/>
</dbReference>
<dbReference type="EMBL" id="AL161549">
    <property type="protein sequence ID" value="CAB78866.1"/>
    <property type="status" value="ALT_SEQ"/>
    <property type="molecule type" value="Genomic_DNA"/>
</dbReference>
<dbReference type="EMBL" id="CP002687">
    <property type="protein sequence ID" value="AEE84071.1"/>
    <property type="molecule type" value="Genomic_DNA"/>
</dbReference>
<dbReference type="EMBL" id="FJ708745">
    <property type="protein sequence ID" value="ACN59339.1"/>
    <property type="molecule type" value="mRNA"/>
</dbReference>
<dbReference type="PIR" id="T04856">
    <property type="entry name" value="T04856"/>
</dbReference>
<dbReference type="RefSeq" id="NP_193599.3">
    <property type="nucleotide sequence ID" value="NM_117980.5"/>
</dbReference>
<dbReference type="SMR" id="C0LGQ4"/>
<dbReference type="BioGRID" id="12891">
    <property type="interactions" value="19"/>
</dbReference>
<dbReference type="FunCoup" id="C0LGQ4">
    <property type="interactions" value="319"/>
</dbReference>
<dbReference type="IntAct" id="C0LGQ4">
    <property type="interactions" value="20"/>
</dbReference>
<dbReference type="STRING" id="3702.C0LGQ4"/>
<dbReference type="GlyCosmos" id="C0LGQ4">
    <property type="glycosylation" value="1 site, No reported glycans"/>
</dbReference>
<dbReference type="GlyGen" id="C0LGQ4">
    <property type="glycosylation" value="1 site"/>
</dbReference>
<dbReference type="iPTMnet" id="C0LGQ4"/>
<dbReference type="PaxDb" id="3702-AT4G18640.1"/>
<dbReference type="ProteomicsDB" id="228869"/>
<dbReference type="EnsemblPlants" id="AT4G18640.1">
    <property type="protein sequence ID" value="AT4G18640.1"/>
    <property type="gene ID" value="AT4G18640"/>
</dbReference>
<dbReference type="GeneID" id="827598"/>
<dbReference type="Gramene" id="AT4G18640.1">
    <property type="protein sequence ID" value="AT4G18640.1"/>
    <property type="gene ID" value="AT4G18640"/>
</dbReference>
<dbReference type="KEGG" id="ath:AT4G18640"/>
<dbReference type="Araport" id="AT4G18640"/>
<dbReference type="TAIR" id="AT4G18640">
    <property type="gene designation" value="MRH1"/>
</dbReference>
<dbReference type="eggNOG" id="ENOG502QTJQ">
    <property type="taxonomic scope" value="Eukaryota"/>
</dbReference>
<dbReference type="HOGENOM" id="CLU_000288_92_4_1"/>
<dbReference type="InParanoid" id="C0LGQ4"/>
<dbReference type="OMA" id="DGCIVYK"/>
<dbReference type="PhylomeDB" id="C0LGQ4"/>
<dbReference type="PRO" id="PR:C0LGQ4"/>
<dbReference type="Proteomes" id="UP000006548">
    <property type="component" value="Chromosome 4"/>
</dbReference>
<dbReference type="ExpressionAtlas" id="C0LGQ4">
    <property type="expression patterns" value="baseline and differential"/>
</dbReference>
<dbReference type="GO" id="GO:0012505">
    <property type="term" value="C:endomembrane system"/>
    <property type="evidence" value="ECO:0000314"/>
    <property type="project" value="TAIR"/>
</dbReference>
<dbReference type="GO" id="GO:0016020">
    <property type="term" value="C:membrane"/>
    <property type="evidence" value="ECO:0007669"/>
    <property type="project" value="UniProtKB-KW"/>
</dbReference>
<dbReference type="GO" id="GO:0090406">
    <property type="term" value="C:pollen tube"/>
    <property type="evidence" value="ECO:0000314"/>
    <property type="project" value="TAIR"/>
</dbReference>
<dbReference type="GO" id="GO:0005524">
    <property type="term" value="F:ATP binding"/>
    <property type="evidence" value="ECO:0007669"/>
    <property type="project" value="UniProtKB-KW"/>
</dbReference>
<dbReference type="GO" id="GO:0106310">
    <property type="term" value="F:protein serine kinase activity"/>
    <property type="evidence" value="ECO:0007669"/>
    <property type="project" value="RHEA"/>
</dbReference>
<dbReference type="GO" id="GO:0004674">
    <property type="term" value="F:protein serine/threonine kinase activity"/>
    <property type="evidence" value="ECO:0007669"/>
    <property type="project" value="UniProtKB-KW"/>
</dbReference>
<dbReference type="GO" id="GO:0048765">
    <property type="term" value="P:root hair cell differentiation"/>
    <property type="evidence" value="ECO:0000315"/>
    <property type="project" value="TAIR"/>
</dbReference>
<dbReference type="FunFam" id="3.30.200.20:FF:000489">
    <property type="entry name" value="Inactive receptor-like serine/threonine-protein kinase"/>
    <property type="match status" value="1"/>
</dbReference>
<dbReference type="FunFam" id="1.10.510.10:FF:000950">
    <property type="entry name" value="Inactive receptor-like serine/threonine-protein kinase At2g40270"/>
    <property type="match status" value="1"/>
</dbReference>
<dbReference type="FunFam" id="3.80.10.10:FF:001386">
    <property type="entry name" value="Protein MALE DISCOVERER 1"/>
    <property type="match status" value="1"/>
</dbReference>
<dbReference type="Gene3D" id="3.30.200.20">
    <property type="entry name" value="Phosphorylase Kinase, domain 1"/>
    <property type="match status" value="1"/>
</dbReference>
<dbReference type="Gene3D" id="3.80.10.10">
    <property type="entry name" value="Ribonuclease Inhibitor"/>
    <property type="match status" value="1"/>
</dbReference>
<dbReference type="Gene3D" id="1.10.510.10">
    <property type="entry name" value="Transferase(Phosphotransferase) domain 1"/>
    <property type="match status" value="1"/>
</dbReference>
<dbReference type="InterPro" id="IPR011009">
    <property type="entry name" value="Kinase-like_dom_sf"/>
</dbReference>
<dbReference type="InterPro" id="IPR001611">
    <property type="entry name" value="Leu-rich_rpt"/>
</dbReference>
<dbReference type="InterPro" id="IPR032675">
    <property type="entry name" value="LRR_dom_sf"/>
</dbReference>
<dbReference type="InterPro" id="IPR013210">
    <property type="entry name" value="LRR_N_plant-typ"/>
</dbReference>
<dbReference type="InterPro" id="IPR000719">
    <property type="entry name" value="Prot_kinase_dom"/>
</dbReference>
<dbReference type="InterPro" id="IPR001245">
    <property type="entry name" value="Ser-Thr/Tyr_kinase_cat_dom"/>
</dbReference>
<dbReference type="PANTHER" id="PTHR46084">
    <property type="entry name" value="PROTEIN MALE DISCOVERER 2"/>
    <property type="match status" value="1"/>
</dbReference>
<dbReference type="PANTHER" id="PTHR46084:SF1">
    <property type="entry name" value="PROTEIN MALE DISCOVERER 2"/>
    <property type="match status" value="1"/>
</dbReference>
<dbReference type="Pfam" id="PF00560">
    <property type="entry name" value="LRR_1"/>
    <property type="match status" value="2"/>
</dbReference>
<dbReference type="Pfam" id="PF08263">
    <property type="entry name" value="LRRNT_2"/>
    <property type="match status" value="1"/>
</dbReference>
<dbReference type="Pfam" id="PF07714">
    <property type="entry name" value="PK_Tyr_Ser-Thr"/>
    <property type="match status" value="1"/>
</dbReference>
<dbReference type="SUPFAM" id="SSF52058">
    <property type="entry name" value="L domain-like"/>
    <property type="match status" value="1"/>
</dbReference>
<dbReference type="SUPFAM" id="SSF56112">
    <property type="entry name" value="Protein kinase-like (PK-like)"/>
    <property type="match status" value="1"/>
</dbReference>
<dbReference type="PROSITE" id="PS50011">
    <property type="entry name" value="PROTEIN_KINASE_DOM"/>
    <property type="match status" value="1"/>
</dbReference>
<feature type="signal peptide" evidence="1">
    <location>
        <begin position="1"/>
        <end position="25"/>
    </location>
</feature>
<feature type="chain" id="PRO_0000387516" description="Protein MALE DISCOVERER 2">
    <location>
        <begin position="26"/>
        <end position="678"/>
    </location>
</feature>
<feature type="topological domain" description="Extracellular" evidence="1">
    <location>
        <begin position="26"/>
        <end position="323"/>
    </location>
</feature>
<feature type="transmembrane region" description="Helical" evidence="1">
    <location>
        <begin position="324"/>
        <end position="344"/>
    </location>
</feature>
<feature type="topological domain" description="Cytoplasmic" evidence="1">
    <location>
        <begin position="345"/>
        <end position="678"/>
    </location>
</feature>
<feature type="repeat" description="LRR 1" evidence="1">
    <location>
        <begin position="71"/>
        <end position="94"/>
    </location>
</feature>
<feature type="repeat" description="LRR 2" evidence="1">
    <location>
        <begin position="95"/>
        <end position="117"/>
    </location>
</feature>
<feature type="repeat" description="LRR 3" evidence="1">
    <location>
        <begin position="119"/>
        <end position="141"/>
    </location>
</feature>
<feature type="repeat" description="LRR 4" evidence="1">
    <location>
        <begin position="143"/>
        <end position="164"/>
    </location>
</feature>
<feature type="domain" description="Protein kinase" evidence="2">
    <location>
        <begin position="346"/>
        <end position="651"/>
    </location>
</feature>
<feature type="region of interest" description="Disordered" evidence="3">
    <location>
        <begin position="247"/>
        <end position="314"/>
    </location>
</feature>
<feature type="compositionally biased region" description="Polar residues" evidence="3">
    <location>
        <begin position="296"/>
        <end position="311"/>
    </location>
</feature>
<feature type="glycosylation site" description="N-linked (GlcNAc...) asparagine" evidence="1">
    <location>
        <position position="52"/>
    </location>
</feature>
<gene>
    <name type="primary">MDIS2</name>
    <name evidence="6" type="synonym">MRH1</name>
    <name type="ordered locus">At4g18640</name>
    <name type="ORF">F28A21.50</name>
</gene>
<comment type="function">
    <text evidence="4 5">Involved in the pollen tube perception of the female signal by binding an unidentified female attractant (PubMed:26863186). May be involved in the regulation of root hairs development (PubMed:16367956).</text>
</comment>
<comment type="catalytic activity">
    <reaction evidence="7">
        <text>L-seryl-[protein] + ATP = O-phospho-L-seryl-[protein] + ADP + H(+)</text>
        <dbReference type="Rhea" id="RHEA:17989"/>
        <dbReference type="Rhea" id="RHEA-COMP:9863"/>
        <dbReference type="Rhea" id="RHEA-COMP:11604"/>
        <dbReference type="ChEBI" id="CHEBI:15378"/>
        <dbReference type="ChEBI" id="CHEBI:29999"/>
        <dbReference type="ChEBI" id="CHEBI:30616"/>
        <dbReference type="ChEBI" id="CHEBI:83421"/>
        <dbReference type="ChEBI" id="CHEBI:456216"/>
        <dbReference type="EC" id="2.7.11.1"/>
    </reaction>
</comment>
<comment type="catalytic activity">
    <reaction evidence="7">
        <text>L-threonyl-[protein] + ATP = O-phospho-L-threonyl-[protein] + ADP + H(+)</text>
        <dbReference type="Rhea" id="RHEA:46608"/>
        <dbReference type="Rhea" id="RHEA-COMP:11060"/>
        <dbReference type="Rhea" id="RHEA-COMP:11605"/>
        <dbReference type="ChEBI" id="CHEBI:15378"/>
        <dbReference type="ChEBI" id="CHEBI:30013"/>
        <dbReference type="ChEBI" id="CHEBI:30616"/>
        <dbReference type="ChEBI" id="CHEBI:61977"/>
        <dbReference type="ChEBI" id="CHEBI:456216"/>
        <dbReference type="EC" id="2.7.11.1"/>
    </reaction>
</comment>
<comment type="interaction">
    <interactant intactId="EBI-20665429">
        <id>C0LGQ4</id>
    </interactant>
    <interactant intactId="EBI-20657062">
        <id>Q9FL63</id>
        <label>At5g24100</label>
    </interactant>
    <organismsDiffer>false</organismsDiffer>
    <experiments>2</experiments>
</comment>
<comment type="subcellular location">
    <subcellularLocation>
        <location evidence="5">Endomembrane system</location>
        <topology evidence="7">Single-pass type I membrane protein</topology>
    </subcellularLocation>
</comment>
<comment type="tissue specificity">
    <text evidence="5">Expressed in pollen tubes and seedlings.</text>
</comment>
<comment type="disruption phenotype">
    <text evidence="4">Short straight root hairs.</text>
</comment>
<comment type="similarity">
    <text evidence="2">Belongs to the protein kinase superfamily. Ser/Thr protein kinase family.</text>
</comment>
<comment type="sequence caution" evidence="7">
    <conflict type="erroneous gene model prediction">
        <sequence resource="EMBL-CDS" id="CAB37449"/>
    </conflict>
</comment>
<comment type="sequence caution" evidence="7">
    <conflict type="erroneous gene model prediction">
        <sequence resource="EMBL-CDS" id="CAB78866"/>
    </conflict>
</comment>
<sequence length="678" mass="75820">MMGCGFHFPWFFFLIIGLQAPLSLSLTSQGSALLKFRARVNSDPHGTLANWNVSGINDLCYWSGVTCVDGKVQILDLSGYSLEGTLAPELSQLSDLRSLILSRNHFSGGIPKEYGSFENLEVLDLRENDLSGQIPPELSNGLSLKHLLLSGNKFSDDMRIKIVRLQSSYEVRLKKSPKLSPLAVLGCINRKLGHCVSRNRIIQVKKVEAIVFRIKATSRRFLKAFPSFLEETDIYKRRELLEETSNLAAEPAPSAPSPSPGIITEASPRSSGSFPAVTNAKKRRPPLVPPVPSPDKGSTSPDISKNQPQDNKQSKGSKHVWLYVVIAVASFVGLLIIVAVIFFCRKRAVKSIGPWKTGLSGQLQKAFVTGVPKLNRSELETACEDFSNIIETFDGYTVYKGTLSSGVEIAVASTAIAESKEWTRAMEMAYRRKIDTLSRINHKNFVNLIGYCEEDDPFNRMMVFEYAPNGTLFEHLHDKETEHLDWSARMRIIMGTAYCLQHMHGMNPPMAHTDFNSSEIYLTDDYAAKVSEIPFNLEARLNPKKHVSGDLEQTSLLLPPEPEANVHSFGVLMLEIISGKLSFSDEYGSIEQWASKYLEKDDLGEMIDPSLKTFKEEELEVICDVIRECLKTEQRQRPSMKDVAEQLKQVINITPEKATPRSSPLWWAELEILSSEAT</sequence>
<keyword id="KW-0067">ATP-binding</keyword>
<keyword id="KW-0325">Glycoprotein</keyword>
<keyword id="KW-0418">Kinase</keyword>
<keyword id="KW-0433">Leucine-rich repeat</keyword>
<keyword id="KW-0472">Membrane</keyword>
<keyword id="KW-0547">Nucleotide-binding</keyword>
<keyword id="KW-0675">Receptor</keyword>
<keyword id="KW-1185">Reference proteome</keyword>
<keyword id="KW-0677">Repeat</keyword>
<keyword id="KW-0723">Serine/threonine-protein kinase</keyword>
<keyword id="KW-0732">Signal</keyword>
<keyword id="KW-0808">Transferase</keyword>
<keyword id="KW-0812">Transmembrane</keyword>
<keyword id="KW-1133">Transmembrane helix</keyword>
<accession>C0LGQ4</accession>
<accession>Q9M0L9</accession>
<accession>Q9SN49</accession>
<proteinExistence type="evidence at protein level"/>
<name>MDIS2_ARATH</name>
<organism>
    <name type="scientific">Arabidopsis thaliana</name>
    <name type="common">Mouse-ear cress</name>
    <dbReference type="NCBI Taxonomy" id="3702"/>
    <lineage>
        <taxon>Eukaryota</taxon>
        <taxon>Viridiplantae</taxon>
        <taxon>Streptophyta</taxon>
        <taxon>Embryophyta</taxon>
        <taxon>Tracheophyta</taxon>
        <taxon>Spermatophyta</taxon>
        <taxon>Magnoliopsida</taxon>
        <taxon>eudicotyledons</taxon>
        <taxon>Gunneridae</taxon>
        <taxon>Pentapetalae</taxon>
        <taxon>rosids</taxon>
        <taxon>malvids</taxon>
        <taxon>Brassicales</taxon>
        <taxon>Brassicaceae</taxon>
        <taxon>Camelineae</taxon>
        <taxon>Arabidopsis</taxon>
    </lineage>
</organism>
<protein>
    <recommendedName>
        <fullName>Protein MALE DISCOVERER 2</fullName>
        <shortName>AtMDIS2</shortName>
    </recommendedName>
    <alternativeName>
        <fullName evidence="6">Probable LRR receptor-like serine/threonine-protein kinase MRH1</fullName>
        <ecNumber evidence="7">2.7.11.1</ecNumber>
    </alternativeName>
    <alternativeName>
        <fullName evidence="6">Protein MORPHOGENESIS OF ROOT HAIR 1</fullName>
    </alternativeName>
</protein>
<reference key="1">
    <citation type="journal article" date="1999" name="Nature">
        <title>Sequence and analysis of chromosome 4 of the plant Arabidopsis thaliana.</title>
        <authorList>
            <person name="Mayer K.F.X."/>
            <person name="Schueller C."/>
            <person name="Wambutt R."/>
            <person name="Murphy G."/>
            <person name="Volckaert G."/>
            <person name="Pohl T."/>
            <person name="Duesterhoeft A."/>
            <person name="Stiekema W."/>
            <person name="Entian K.-D."/>
            <person name="Terryn N."/>
            <person name="Harris B."/>
            <person name="Ansorge W."/>
            <person name="Brandt P."/>
            <person name="Grivell L.A."/>
            <person name="Rieger M."/>
            <person name="Weichselgartner M."/>
            <person name="de Simone V."/>
            <person name="Obermaier B."/>
            <person name="Mache R."/>
            <person name="Mueller M."/>
            <person name="Kreis M."/>
            <person name="Delseny M."/>
            <person name="Puigdomenech P."/>
            <person name="Watson M."/>
            <person name="Schmidtheini T."/>
            <person name="Reichert B."/>
            <person name="Portetelle D."/>
            <person name="Perez-Alonso M."/>
            <person name="Boutry M."/>
            <person name="Bancroft I."/>
            <person name="Vos P."/>
            <person name="Hoheisel J."/>
            <person name="Zimmermann W."/>
            <person name="Wedler H."/>
            <person name="Ridley P."/>
            <person name="Langham S.-A."/>
            <person name="McCullagh B."/>
            <person name="Bilham L."/>
            <person name="Robben J."/>
            <person name="van der Schueren J."/>
            <person name="Grymonprez B."/>
            <person name="Chuang Y.-J."/>
            <person name="Vandenbussche F."/>
            <person name="Braeken M."/>
            <person name="Weltjens I."/>
            <person name="Voet M."/>
            <person name="Bastiaens I."/>
            <person name="Aert R."/>
            <person name="Defoor E."/>
            <person name="Weitzenegger T."/>
            <person name="Bothe G."/>
            <person name="Ramsperger U."/>
            <person name="Hilbert H."/>
            <person name="Braun M."/>
            <person name="Holzer E."/>
            <person name="Brandt A."/>
            <person name="Peters S."/>
            <person name="van Staveren M."/>
            <person name="Dirkse W."/>
            <person name="Mooijman P."/>
            <person name="Klein Lankhorst R."/>
            <person name="Rose M."/>
            <person name="Hauf J."/>
            <person name="Koetter P."/>
            <person name="Berneiser S."/>
            <person name="Hempel S."/>
            <person name="Feldpausch M."/>
            <person name="Lamberth S."/>
            <person name="Van den Daele H."/>
            <person name="De Keyser A."/>
            <person name="Buysshaert C."/>
            <person name="Gielen J."/>
            <person name="Villarroel R."/>
            <person name="De Clercq R."/>
            <person name="van Montagu M."/>
            <person name="Rogers J."/>
            <person name="Cronin A."/>
            <person name="Quail M.A."/>
            <person name="Bray-Allen S."/>
            <person name="Clark L."/>
            <person name="Doggett J."/>
            <person name="Hall S."/>
            <person name="Kay M."/>
            <person name="Lennard N."/>
            <person name="McLay K."/>
            <person name="Mayes R."/>
            <person name="Pettett A."/>
            <person name="Rajandream M.A."/>
            <person name="Lyne M."/>
            <person name="Benes V."/>
            <person name="Rechmann S."/>
            <person name="Borkova D."/>
            <person name="Bloecker H."/>
            <person name="Scharfe M."/>
            <person name="Grimm M."/>
            <person name="Loehnert T.-H."/>
            <person name="Dose S."/>
            <person name="de Haan M."/>
            <person name="Maarse A.C."/>
            <person name="Schaefer M."/>
            <person name="Mueller-Auer S."/>
            <person name="Gabel C."/>
            <person name="Fuchs M."/>
            <person name="Fartmann B."/>
            <person name="Granderath K."/>
            <person name="Dauner D."/>
            <person name="Herzl A."/>
            <person name="Neumann S."/>
            <person name="Argiriou A."/>
            <person name="Vitale D."/>
            <person name="Liguori R."/>
            <person name="Piravandi E."/>
            <person name="Massenet O."/>
            <person name="Quigley F."/>
            <person name="Clabauld G."/>
            <person name="Muendlein A."/>
            <person name="Felber R."/>
            <person name="Schnabl S."/>
            <person name="Hiller R."/>
            <person name="Schmidt W."/>
            <person name="Lecharny A."/>
            <person name="Aubourg S."/>
            <person name="Chefdor F."/>
            <person name="Cooke R."/>
            <person name="Berger C."/>
            <person name="Monfort A."/>
            <person name="Casacuberta E."/>
            <person name="Gibbons T."/>
            <person name="Weber N."/>
            <person name="Vandenbol M."/>
            <person name="Bargues M."/>
            <person name="Terol J."/>
            <person name="Torres A."/>
            <person name="Perez-Perez A."/>
            <person name="Purnelle B."/>
            <person name="Bent E."/>
            <person name="Johnson S."/>
            <person name="Tacon D."/>
            <person name="Jesse T."/>
            <person name="Heijnen L."/>
            <person name="Schwarz S."/>
            <person name="Scholler P."/>
            <person name="Heber S."/>
            <person name="Francs P."/>
            <person name="Bielke C."/>
            <person name="Frishman D."/>
            <person name="Haase D."/>
            <person name="Lemcke K."/>
            <person name="Mewes H.-W."/>
            <person name="Stocker S."/>
            <person name="Zaccaria P."/>
            <person name="Bevan M."/>
            <person name="Wilson R.K."/>
            <person name="de la Bastide M."/>
            <person name="Habermann K."/>
            <person name="Parnell L."/>
            <person name="Dedhia N."/>
            <person name="Gnoj L."/>
            <person name="Schutz K."/>
            <person name="Huang E."/>
            <person name="Spiegel L."/>
            <person name="Sekhon M."/>
            <person name="Murray J."/>
            <person name="Sheet P."/>
            <person name="Cordes M."/>
            <person name="Abu-Threideh J."/>
            <person name="Stoneking T."/>
            <person name="Kalicki J."/>
            <person name="Graves T."/>
            <person name="Harmon G."/>
            <person name="Edwards J."/>
            <person name="Latreille P."/>
            <person name="Courtney L."/>
            <person name="Cloud J."/>
            <person name="Abbott A."/>
            <person name="Scott K."/>
            <person name="Johnson D."/>
            <person name="Minx P."/>
            <person name="Bentley D."/>
            <person name="Fulton B."/>
            <person name="Miller N."/>
            <person name="Greco T."/>
            <person name="Kemp K."/>
            <person name="Kramer J."/>
            <person name="Fulton L."/>
            <person name="Mardis E."/>
            <person name="Dante M."/>
            <person name="Pepin K."/>
            <person name="Hillier L.W."/>
            <person name="Nelson J."/>
            <person name="Spieth J."/>
            <person name="Ryan E."/>
            <person name="Andrews S."/>
            <person name="Geisel C."/>
            <person name="Layman D."/>
            <person name="Du H."/>
            <person name="Ali J."/>
            <person name="Berghoff A."/>
            <person name="Jones K."/>
            <person name="Drone K."/>
            <person name="Cotton M."/>
            <person name="Joshu C."/>
            <person name="Antonoiu B."/>
            <person name="Zidanic M."/>
            <person name="Strong C."/>
            <person name="Sun H."/>
            <person name="Lamar B."/>
            <person name="Yordan C."/>
            <person name="Ma P."/>
            <person name="Zhong J."/>
            <person name="Preston R."/>
            <person name="Vil D."/>
            <person name="Shekher M."/>
            <person name="Matero A."/>
            <person name="Shah R."/>
            <person name="Swaby I.K."/>
            <person name="O'Shaughnessy A."/>
            <person name="Rodriguez M."/>
            <person name="Hoffman J."/>
            <person name="Till S."/>
            <person name="Granat S."/>
            <person name="Shohdy N."/>
            <person name="Hasegawa A."/>
            <person name="Hameed A."/>
            <person name="Lodhi M."/>
            <person name="Johnson A."/>
            <person name="Chen E."/>
            <person name="Marra M.A."/>
            <person name="Martienssen R."/>
            <person name="McCombie W.R."/>
        </authorList>
    </citation>
    <scope>NUCLEOTIDE SEQUENCE [LARGE SCALE GENOMIC DNA]</scope>
    <source>
        <strain>cv. Columbia</strain>
    </source>
</reference>
<reference key="2">
    <citation type="journal article" date="2017" name="Plant J.">
        <title>Araport11: a complete reannotation of the Arabidopsis thaliana reference genome.</title>
        <authorList>
            <person name="Cheng C.Y."/>
            <person name="Krishnakumar V."/>
            <person name="Chan A.P."/>
            <person name="Thibaud-Nissen F."/>
            <person name="Schobel S."/>
            <person name="Town C.D."/>
        </authorList>
    </citation>
    <scope>GENOME REANNOTATION</scope>
    <source>
        <strain>cv. Columbia</strain>
    </source>
</reference>
<reference key="3">
    <citation type="journal article" date="2010" name="BMC Genomics">
        <title>Genome-wide cloning and sequence analysis of leucine-rich repeat receptor-like protein kinase genes in Arabidopsis thaliana.</title>
        <authorList>
            <person name="Gou X."/>
            <person name="He K."/>
            <person name="Yang H."/>
            <person name="Yuan T."/>
            <person name="Lin H."/>
            <person name="Clouse S.D."/>
            <person name="Li J."/>
        </authorList>
    </citation>
    <scope>NUCLEOTIDE SEQUENCE [LARGE SCALE MRNA]</scope>
    <source>
        <strain>cv. Columbia</strain>
    </source>
</reference>
<reference key="4">
    <citation type="journal article" date="2006" name="Plant J.">
        <title>Analysis of the root-hair morphogenesis transcriptome reveals the molecular identity of six genes with roles in root-hair development in Arabidopsis.</title>
        <authorList>
            <person name="Jones M.A."/>
            <person name="Raymond M.J."/>
            <person name="Smirnoff N."/>
        </authorList>
    </citation>
    <scope>FUNCTION</scope>
    <scope>DISRUPTION PHENOTYPE</scope>
</reference>
<reference key="5">
    <citation type="journal article" date="2016" name="Nature">
        <title>A receptor heteromer mediates the male perception of female attractants in plants.</title>
        <authorList>
            <person name="Wang T."/>
            <person name="Liang L."/>
            <person name="Xue Y."/>
            <person name="Jia P.F."/>
            <person name="Chen W."/>
            <person name="Zhang M.X."/>
            <person name="Wang Y.C."/>
            <person name="Li H.J."/>
            <person name="Yang W.C."/>
        </authorList>
    </citation>
    <scope>FUNCTION</scope>
    <scope>TISSUE SPECIFICITY</scope>
    <scope>SUBCELLULAR LOCATION</scope>
</reference>